<sequence>MSATRAKKVKMATKSCPECDQQIPVACKSCPCGYIFISRKLLNAKHSEKSPPSTENKHEAKRRRTERVRREKINSTVNKDLENRKRSRSNSHSDHIRRGRGRPKSSSAKKHEEEREKQEKEIDIYANLSDEKAFVFSVALAEINRKIINQRLIL</sequence>
<protein>
    <recommendedName>
        <fullName>UPF0547 protein C16orf87 homolog</fullName>
    </recommendedName>
</protein>
<keyword id="KW-0175">Coiled coil</keyword>
<keyword id="KW-0597">Phosphoprotein</keyword>
<keyword id="KW-1185">Reference proteome</keyword>
<organism>
    <name type="scientific">Mus musculus</name>
    <name type="common">Mouse</name>
    <dbReference type="NCBI Taxonomy" id="10090"/>
    <lineage>
        <taxon>Eukaryota</taxon>
        <taxon>Metazoa</taxon>
        <taxon>Chordata</taxon>
        <taxon>Craniata</taxon>
        <taxon>Vertebrata</taxon>
        <taxon>Euteleostomi</taxon>
        <taxon>Mammalia</taxon>
        <taxon>Eutheria</taxon>
        <taxon>Euarchontoglires</taxon>
        <taxon>Glires</taxon>
        <taxon>Rodentia</taxon>
        <taxon>Myomorpha</taxon>
        <taxon>Muroidea</taxon>
        <taxon>Muridae</taxon>
        <taxon>Murinae</taxon>
        <taxon>Mus</taxon>
        <taxon>Mus</taxon>
    </lineage>
</organism>
<dbReference type="EMBL" id="AK014959">
    <property type="protein sequence ID" value="BAB29640.1"/>
    <property type="molecule type" value="mRNA"/>
</dbReference>
<dbReference type="EMBL" id="AK017512">
    <property type="protein sequence ID" value="BAB30783.1"/>
    <property type="molecule type" value="mRNA"/>
</dbReference>
<dbReference type="EMBL" id="AK169408">
    <property type="protein sequence ID" value="BAE41154.1"/>
    <property type="molecule type" value="mRNA"/>
</dbReference>
<dbReference type="EMBL" id="BC040087">
    <property type="protein sequence ID" value="AAH40087.1"/>
    <property type="molecule type" value="mRNA"/>
</dbReference>
<dbReference type="EMBL" id="BC050139">
    <property type="protein sequence ID" value="AAH50139.1"/>
    <property type="molecule type" value="mRNA"/>
</dbReference>
<dbReference type="CCDS" id="CCDS22498.1"/>
<dbReference type="RefSeq" id="NP_079998.1">
    <property type="nucleotide sequence ID" value="NM_025722.3"/>
</dbReference>
<dbReference type="FunCoup" id="Q9CR55">
    <property type="interactions" value="80"/>
</dbReference>
<dbReference type="STRING" id="10090.ENSMUSP00000040975"/>
<dbReference type="iPTMnet" id="Q9CR55"/>
<dbReference type="PhosphoSitePlus" id="Q9CR55"/>
<dbReference type="PaxDb" id="10090-ENSMUSP00000040975"/>
<dbReference type="Pumba" id="Q9CR55"/>
<dbReference type="Antibodypedia" id="52031">
    <property type="antibodies" value="45 antibodies from 11 providers"/>
</dbReference>
<dbReference type="Ensembl" id="ENSMUST00000047749.7">
    <property type="protein sequence ID" value="ENSMUSP00000040975.6"/>
    <property type="gene ID" value="ENSMUSG00000036934.10"/>
</dbReference>
<dbReference type="GeneID" id="66714"/>
<dbReference type="KEGG" id="mmu:66714"/>
<dbReference type="UCSC" id="uc009mpv.2">
    <property type="organism name" value="mouse"/>
</dbReference>
<dbReference type="AGR" id="MGI:1913964"/>
<dbReference type="MGI" id="MGI:1913964">
    <property type="gene designation" value="4921524J17Rik"/>
</dbReference>
<dbReference type="VEuPathDB" id="HostDB:ENSMUSG00000036934"/>
<dbReference type="eggNOG" id="ENOG502RY8J">
    <property type="taxonomic scope" value="Eukaryota"/>
</dbReference>
<dbReference type="GeneTree" id="ENSGT00390000009505"/>
<dbReference type="HOGENOM" id="CLU_141213_1_0_1"/>
<dbReference type="InParanoid" id="Q9CR55"/>
<dbReference type="OMA" id="QHVPVAC"/>
<dbReference type="OrthoDB" id="5981040at2759"/>
<dbReference type="PhylomeDB" id="Q9CR55"/>
<dbReference type="TreeFam" id="TF331719"/>
<dbReference type="BioGRID-ORCS" id="66714">
    <property type="hits" value="4 hits in 77 CRISPR screens"/>
</dbReference>
<dbReference type="PRO" id="PR:Q9CR55"/>
<dbReference type="Proteomes" id="UP000000589">
    <property type="component" value="Chromosome 8"/>
</dbReference>
<dbReference type="RNAct" id="Q9CR55">
    <property type="molecule type" value="protein"/>
</dbReference>
<dbReference type="Bgee" id="ENSMUSG00000036934">
    <property type="expression patterns" value="Expressed in secondary oocyte and 86 other cell types or tissues"/>
</dbReference>
<dbReference type="ExpressionAtlas" id="Q9CR55">
    <property type="expression patterns" value="baseline and differential"/>
</dbReference>
<dbReference type="InterPro" id="IPR040246">
    <property type="entry name" value="C16orf87-like"/>
</dbReference>
<dbReference type="InterPro" id="IPR018886">
    <property type="entry name" value="UPF0547"/>
</dbReference>
<dbReference type="PANTHER" id="PTHR31101">
    <property type="entry name" value="UPF0547 PROTEIN C16ORF87"/>
    <property type="match status" value="1"/>
</dbReference>
<dbReference type="Pfam" id="PF10571">
    <property type="entry name" value="UPF0547"/>
    <property type="match status" value="1"/>
</dbReference>
<name>CP087_MOUSE</name>
<reference key="1">
    <citation type="journal article" date="2005" name="Science">
        <title>The transcriptional landscape of the mammalian genome.</title>
        <authorList>
            <person name="Carninci P."/>
            <person name="Kasukawa T."/>
            <person name="Katayama S."/>
            <person name="Gough J."/>
            <person name="Frith M.C."/>
            <person name="Maeda N."/>
            <person name="Oyama R."/>
            <person name="Ravasi T."/>
            <person name="Lenhard B."/>
            <person name="Wells C."/>
            <person name="Kodzius R."/>
            <person name="Shimokawa K."/>
            <person name="Bajic V.B."/>
            <person name="Brenner S.E."/>
            <person name="Batalov S."/>
            <person name="Forrest A.R."/>
            <person name="Zavolan M."/>
            <person name="Davis M.J."/>
            <person name="Wilming L.G."/>
            <person name="Aidinis V."/>
            <person name="Allen J.E."/>
            <person name="Ambesi-Impiombato A."/>
            <person name="Apweiler R."/>
            <person name="Aturaliya R.N."/>
            <person name="Bailey T.L."/>
            <person name="Bansal M."/>
            <person name="Baxter L."/>
            <person name="Beisel K.W."/>
            <person name="Bersano T."/>
            <person name="Bono H."/>
            <person name="Chalk A.M."/>
            <person name="Chiu K.P."/>
            <person name="Choudhary V."/>
            <person name="Christoffels A."/>
            <person name="Clutterbuck D.R."/>
            <person name="Crowe M.L."/>
            <person name="Dalla E."/>
            <person name="Dalrymple B.P."/>
            <person name="de Bono B."/>
            <person name="Della Gatta G."/>
            <person name="di Bernardo D."/>
            <person name="Down T."/>
            <person name="Engstrom P."/>
            <person name="Fagiolini M."/>
            <person name="Faulkner G."/>
            <person name="Fletcher C.F."/>
            <person name="Fukushima T."/>
            <person name="Furuno M."/>
            <person name="Futaki S."/>
            <person name="Gariboldi M."/>
            <person name="Georgii-Hemming P."/>
            <person name="Gingeras T.R."/>
            <person name="Gojobori T."/>
            <person name="Green R.E."/>
            <person name="Gustincich S."/>
            <person name="Harbers M."/>
            <person name="Hayashi Y."/>
            <person name="Hensch T.K."/>
            <person name="Hirokawa N."/>
            <person name="Hill D."/>
            <person name="Huminiecki L."/>
            <person name="Iacono M."/>
            <person name="Ikeo K."/>
            <person name="Iwama A."/>
            <person name="Ishikawa T."/>
            <person name="Jakt M."/>
            <person name="Kanapin A."/>
            <person name="Katoh M."/>
            <person name="Kawasawa Y."/>
            <person name="Kelso J."/>
            <person name="Kitamura H."/>
            <person name="Kitano H."/>
            <person name="Kollias G."/>
            <person name="Krishnan S.P."/>
            <person name="Kruger A."/>
            <person name="Kummerfeld S.K."/>
            <person name="Kurochkin I.V."/>
            <person name="Lareau L.F."/>
            <person name="Lazarevic D."/>
            <person name="Lipovich L."/>
            <person name="Liu J."/>
            <person name="Liuni S."/>
            <person name="McWilliam S."/>
            <person name="Madan Babu M."/>
            <person name="Madera M."/>
            <person name="Marchionni L."/>
            <person name="Matsuda H."/>
            <person name="Matsuzawa S."/>
            <person name="Miki H."/>
            <person name="Mignone F."/>
            <person name="Miyake S."/>
            <person name="Morris K."/>
            <person name="Mottagui-Tabar S."/>
            <person name="Mulder N."/>
            <person name="Nakano N."/>
            <person name="Nakauchi H."/>
            <person name="Ng P."/>
            <person name="Nilsson R."/>
            <person name="Nishiguchi S."/>
            <person name="Nishikawa S."/>
            <person name="Nori F."/>
            <person name="Ohara O."/>
            <person name="Okazaki Y."/>
            <person name="Orlando V."/>
            <person name="Pang K.C."/>
            <person name="Pavan W.J."/>
            <person name="Pavesi G."/>
            <person name="Pesole G."/>
            <person name="Petrovsky N."/>
            <person name="Piazza S."/>
            <person name="Reed J."/>
            <person name="Reid J.F."/>
            <person name="Ring B.Z."/>
            <person name="Ringwald M."/>
            <person name="Rost B."/>
            <person name="Ruan Y."/>
            <person name="Salzberg S.L."/>
            <person name="Sandelin A."/>
            <person name="Schneider C."/>
            <person name="Schoenbach C."/>
            <person name="Sekiguchi K."/>
            <person name="Semple C.A."/>
            <person name="Seno S."/>
            <person name="Sessa L."/>
            <person name="Sheng Y."/>
            <person name="Shibata Y."/>
            <person name="Shimada H."/>
            <person name="Shimada K."/>
            <person name="Silva D."/>
            <person name="Sinclair B."/>
            <person name="Sperling S."/>
            <person name="Stupka E."/>
            <person name="Sugiura K."/>
            <person name="Sultana R."/>
            <person name="Takenaka Y."/>
            <person name="Taki K."/>
            <person name="Tammoja K."/>
            <person name="Tan S.L."/>
            <person name="Tang S."/>
            <person name="Taylor M.S."/>
            <person name="Tegner J."/>
            <person name="Teichmann S.A."/>
            <person name="Ueda H.R."/>
            <person name="van Nimwegen E."/>
            <person name="Verardo R."/>
            <person name="Wei C.L."/>
            <person name="Yagi K."/>
            <person name="Yamanishi H."/>
            <person name="Zabarovsky E."/>
            <person name="Zhu S."/>
            <person name="Zimmer A."/>
            <person name="Hide W."/>
            <person name="Bult C."/>
            <person name="Grimmond S.M."/>
            <person name="Teasdale R.D."/>
            <person name="Liu E.T."/>
            <person name="Brusic V."/>
            <person name="Quackenbush J."/>
            <person name="Wahlestedt C."/>
            <person name="Mattick J.S."/>
            <person name="Hume D.A."/>
            <person name="Kai C."/>
            <person name="Sasaki D."/>
            <person name="Tomaru Y."/>
            <person name="Fukuda S."/>
            <person name="Kanamori-Katayama M."/>
            <person name="Suzuki M."/>
            <person name="Aoki J."/>
            <person name="Arakawa T."/>
            <person name="Iida J."/>
            <person name="Imamura K."/>
            <person name="Itoh M."/>
            <person name="Kato T."/>
            <person name="Kawaji H."/>
            <person name="Kawagashira N."/>
            <person name="Kawashima T."/>
            <person name="Kojima M."/>
            <person name="Kondo S."/>
            <person name="Konno H."/>
            <person name="Nakano K."/>
            <person name="Ninomiya N."/>
            <person name="Nishio T."/>
            <person name="Okada M."/>
            <person name="Plessy C."/>
            <person name="Shibata K."/>
            <person name="Shiraki T."/>
            <person name="Suzuki S."/>
            <person name="Tagami M."/>
            <person name="Waki K."/>
            <person name="Watahiki A."/>
            <person name="Okamura-Oho Y."/>
            <person name="Suzuki H."/>
            <person name="Kawai J."/>
            <person name="Hayashizaki Y."/>
        </authorList>
    </citation>
    <scope>NUCLEOTIDE SEQUENCE [LARGE SCALE MRNA]</scope>
    <source>
        <strain>C57BL/6J</strain>
        <tissue>Embryo</tissue>
        <tissue>Fetal kidney</tissue>
        <tissue>Testis</tissue>
    </source>
</reference>
<reference key="2">
    <citation type="journal article" date="2004" name="Genome Res.">
        <title>The status, quality, and expansion of the NIH full-length cDNA project: the Mammalian Gene Collection (MGC).</title>
        <authorList>
            <consortium name="The MGC Project Team"/>
        </authorList>
    </citation>
    <scope>NUCLEOTIDE SEQUENCE [LARGE SCALE MRNA]</scope>
    <source>
        <strain>129/Sv X 129SvCp</strain>
        <strain>FVB/N</strain>
        <tissue>Embryonic stem cell</tissue>
        <tissue>Mammary tumor</tissue>
    </source>
</reference>
<accession>Q9CR55</accession>
<feature type="chain" id="PRO_0000326522" description="UPF0547 protein C16orf87 homolog">
    <location>
        <begin position="1"/>
        <end position="154"/>
    </location>
</feature>
<feature type="region of interest" description="Disordered" evidence="3">
    <location>
        <begin position="43"/>
        <end position="119"/>
    </location>
</feature>
<feature type="coiled-coil region" evidence="2">
    <location>
        <begin position="104"/>
        <end position="132"/>
    </location>
</feature>
<feature type="compositionally biased region" description="Basic and acidic residues" evidence="3">
    <location>
        <begin position="68"/>
        <end position="84"/>
    </location>
</feature>
<feature type="compositionally biased region" description="Basic and acidic residues" evidence="3">
    <location>
        <begin position="109"/>
        <end position="119"/>
    </location>
</feature>
<feature type="modified residue" description="Phosphoserine" evidence="1">
    <location>
        <position position="91"/>
    </location>
</feature>
<evidence type="ECO:0000250" key="1">
    <source>
        <dbReference type="UniProtKB" id="Q6PH81"/>
    </source>
</evidence>
<evidence type="ECO:0000255" key="2"/>
<evidence type="ECO:0000256" key="3">
    <source>
        <dbReference type="SAM" id="MobiDB-lite"/>
    </source>
</evidence>
<evidence type="ECO:0000305" key="4"/>
<proteinExistence type="evidence at transcript level"/>
<comment type="similarity">
    <text evidence="4">Belongs to the UPF0547 family.</text>
</comment>